<protein>
    <recommendedName>
        <fullName evidence="1">3-demethoxyubiquinol 3-hydroxylase</fullName>
        <shortName evidence="1">DMQ hydroxylase</shortName>
        <ecNumber evidence="1">1.14.99.60</ecNumber>
    </recommendedName>
    <alternativeName>
        <fullName evidence="1">2-nonaprenyl-3-methyl-6-methoxy-1,4-benzoquinol hydroxylase</fullName>
    </alternativeName>
</protein>
<proteinExistence type="inferred from homology"/>
<feature type="chain" id="PRO_0000338693" description="3-demethoxyubiquinol 3-hydroxylase">
    <location>
        <begin position="1"/>
        <end position="208"/>
    </location>
</feature>
<feature type="binding site" evidence="1">
    <location>
        <position position="57"/>
    </location>
    <ligand>
        <name>Fe cation</name>
        <dbReference type="ChEBI" id="CHEBI:24875"/>
        <label>1</label>
    </ligand>
</feature>
<feature type="binding site" evidence="1">
    <location>
        <position position="87"/>
    </location>
    <ligand>
        <name>Fe cation</name>
        <dbReference type="ChEBI" id="CHEBI:24875"/>
        <label>1</label>
    </ligand>
</feature>
<feature type="binding site" evidence="1">
    <location>
        <position position="87"/>
    </location>
    <ligand>
        <name>Fe cation</name>
        <dbReference type="ChEBI" id="CHEBI:24875"/>
        <label>2</label>
    </ligand>
</feature>
<feature type="binding site" evidence="1">
    <location>
        <position position="90"/>
    </location>
    <ligand>
        <name>Fe cation</name>
        <dbReference type="ChEBI" id="CHEBI:24875"/>
        <label>1</label>
    </ligand>
</feature>
<feature type="binding site" evidence="1">
    <location>
        <position position="139"/>
    </location>
    <ligand>
        <name>Fe cation</name>
        <dbReference type="ChEBI" id="CHEBI:24875"/>
        <label>2</label>
    </ligand>
</feature>
<feature type="binding site" evidence="1">
    <location>
        <position position="171"/>
    </location>
    <ligand>
        <name>Fe cation</name>
        <dbReference type="ChEBI" id="CHEBI:24875"/>
        <label>1</label>
    </ligand>
</feature>
<feature type="binding site" evidence="1">
    <location>
        <position position="171"/>
    </location>
    <ligand>
        <name>Fe cation</name>
        <dbReference type="ChEBI" id="CHEBI:24875"/>
        <label>2</label>
    </ligand>
</feature>
<feature type="binding site" evidence="1">
    <location>
        <position position="174"/>
    </location>
    <ligand>
        <name>Fe cation</name>
        <dbReference type="ChEBI" id="CHEBI:24875"/>
        <label>2</label>
    </ligand>
</feature>
<organism>
    <name type="scientific">Janthinobacterium sp. (strain Marseille)</name>
    <name type="common">Minibacterium massiliensis</name>
    <dbReference type="NCBI Taxonomy" id="375286"/>
    <lineage>
        <taxon>Bacteria</taxon>
        <taxon>Pseudomonadati</taxon>
        <taxon>Pseudomonadota</taxon>
        <taxon>Betaproteobacteria</taxon>
        <taxon>Burkholderiales</taxon>
        <taxon>Oxalobacteraceae</taxon>
        <taxon>Janthinobacterium</taxon>
    </lineage>
</organism>
<gene>
    <name evidence="1" type="primary">coq7</name>
    <name type="ordered locus">mma_0292</name>
</gene>
<reference key="1">
    <citation type="journal article" date="2007" name="PLoS Genet.">
        <title>Genome analysis of Minibacterium massiliensis highlights the convergent evolution of water-living bacteria.</title>
        <authorList>
            <person name="Audic S."/>
            <person name="Robert C."/>
            <person name="Campagna B."/>
            <person name="Parinello H."/>
            <person name="Claverie J.-M."/>
            <person name="Raoult D."/>
            <person name="Drancourt M."/>
        </authorList>
    </citation>
    <scope>NUCLEOTIDE SEQUENCE [LARGE SCALE GENOMIC DNA]</scope>
    <source>
        <strain>Marseille</strain>
    </source>
</reference>
<name>COQ7_JANMA</name>
<dbReference type="EC" id="1.14.99.60" evidence="1"/>
<dbReference type="EMBL" id="CP000269">
    <property type="protein sequence ID" value="ABR89876.1"/>
    <property type="molecule type" value="Genomic_DNA"/>
</dbReference>
<dbReference type="RefSeq" id="WP_012078157.1">
    <property type="nucleotide sequence ID" value="NC_009659.1"/>
</dbReference>
<dbReference type="SMR" id="A6SUN5"/>
<dbReference type="STRING" id="375286.mma_0292"/>
<dbReference type="KEGG" id="mms:mma_0292"/>
<dbReference type="eggNOG" id="COG2941">
    <property type="taxonomic scope" value="Bacteria"/>
</dbReference>
<dbReference type="HOGENOM" id="CLU_088601_0_0_4"/>
<dbReference type="OrthoDB" id="5192789at2"/>
<dbReference type="UniPathway" id="UPA00232"/>
<dbReference type="Proteomes" id="UP000006388">
    <property type="component" value="Chromosome"/>
</dbReference>
<dbReference type="GO" id="GO:0005886">
    <property type="term" value="C:plasma membrane"/>
    <property type="evidence" value="ECO:0007669"/>
    <property type="project" value="UniProtKB-SubCell"/>
</dbReference>
<dbReference type="GO" id="GO:0008682">
    <property type="term" value="F:3-demethoxyubiquinol 3-hydroxylase activity"/>
    <property type="evidence" value="ECO:0007669"/>
    <property type="project" value="UniProtKB-EC"/>
</dbReference>
<dbReference type="GO" id="GO:0046872">
    <property type="term" value="F:metal ion binding"/>
    <property type="evidence" value="ECO:0007669"/>
    <property type="project" value="UniProtKB-KW"/>
</dbReference>
<dbReference type="GO" id="GO:0006744">
    <property type="term" value="P:ubiquinone biosynthetic process"/>
    <property type="evidence" value="ECO:0007669"/>
    <property type="project" value="UniProtKB-UniRule"/>
</dbReference>
<dbReference type="CDD" id="cd01042">
    <property type="entry name" value="DMQH"/>
    <property type="match status" value="1"/>
</dbReference>
<dbReference type="Gene3D" id="1.20.1260.10">
    <property type="match status" value="1"/>
</dbReference>
<dbReference type="HAMAP" id="MF_01658">
    <property type="entry name" value="COQ7"/>
    <property type="match status" value="1"/>
</dbReference>
<dbReference type="InterPro" id="IPR047809">
    <property type="entry name" value="COQ7_proteobact"/>
</dbReference>
<dbReference type="InterPro" id="IPR012347">
    <property type="entry name" value="Ferritin-like"/>
</dbReference>
<dbReference type="InterPro" id="IPR009078">
    <property type="entry name" value="Ferritin-like_SF"/>
</dbReference>
<dbReference type="InterPro" id="IPR011566">
    <property type="entry name" value="Ubq_synth_Coq7"/>
</dbReference>
<dbReference type="NCBIfam" id="NF033656">
    <property type="entry name" value="DMQ_monoox_COQ7"/>
    <property type="match status" value="1"/>
</dbReference>
<dbReference type="PANTHER" id="PTHR11237:SF4">
    <property type="entry name" value="5-DEMETHOXYUBIQUINONE HYDROXYLASE, MITOCHONDRIAL"/>
    <property type="match status" value="1"/>
</dbReference>
<dbReference type="PANTHER" id="PTHR11237">
    <property type="entry name" value="COENZYME Q10 BIOSYNTHESIS PROTEIN 7"/>
    <property type="match status" value="1"/>
</dbReference>
<dbReference type="Pfam" id="PF03232">
    <property type="entry name" value="COQ7"/>
    <property type="match status" value="1"/>
</dbReference>
<dbReference type="SUPFAM" id="SSF47240">
    <property type="entry name" value="Ferritin-like"/>
    <property type="match status" value="1"/>
</dbReference>
<comment type="function">
    <text evidence="1">Catalyzes the hydroxylation of 2-nonaprenyl-3-methyl-6-methoxy-1,4-benzoquinol during ubiquinone biosynthesis.</text>
</comment>
<comment type="catalytic activity">
    <reaction evidence="1">
        <text>a 5-methoxy-2-methyl-3-(all-trans-polyprenyl)benzene-1,4-diol + AH2 + O2 = a 3-demethylubiquinol + A + H2O</text>
        <dbReference type="Rhea" id="RHEA:50908"/>
        <dbReference type="Rhea" id="RHEA-COMP:10859"/>
        <dbReference type="Rhea" id="RHEA-COMP:10914"/>
        <dbReference type="ChEBI" id="CHEBI:13193"/>
        <dbReference type="ChEBI" id="CHEBI:15377"/>
        <dbReference type="ChEBI" id="CHEBI:15379"/>
        <dbReference type="ChEBI" id="CHEBI:17499"/>
        <dbReference type="ChEBI" id="CHEBI:84167"/>
        <dbReference type="ChEBI" id="CHEBI:84422"/>
        <dbReference type="EC" id="1.14.99.60"/>
    </reaction>
</comment>
<comment type="cofactor">
    <cofactor evidence="1">
        <name>Fe cation</name>
        <dbReference type="ChEBI" id="CHEBI:24875"/>
    </cofactor>
    <text evidence="1">Binds 2 iron ions per subunit.</text>
</comment>
<comment type="pathway">
    <text evidence="1">Cofactor biosynthesis; ubiquinone biosynthesis.</text>
</comment>
<comment type="subcellular location">
    <subcellularLocation>
        <location evidence="1">Cell membrane</location>
        <topology evidence="1">Peripheral membrane protein</topology>
    </subcellularLocation>
</comment>
<comment type="similarity">
    <text evidence="1">Belongs to the COQ7 family.</text>
</comment>
<keyword id="KW-1003">Cell membrane</keyword>
<keyword id="KW-0408">Iron</keyword>
<keyword id="KW-0472">Membrane</keyword>
<keyword id="KW-0479">Metal-binding</keyword>
<keyword id="KW-0503">Monooxygenase</keyword>
<keyword id="KW-0560">Oxidoreductase</keyword>
<keyword id="KW-0831">Ubiquinone biosynthesis</keyword>
<evidence type="ECO:0000255" key="1">
    <source>
        <dbReference type="HAMAP-Rule" id="MF_01658"/>
    </source>
</evidence>
<sequence length="208" mass="22419">MQFPDRLIQHFDSALRVMSGVSVAGRPNPAAKVADGDLDSAQRRHSAGLMRVNHVGEVCAQALYQAQAQFARSPAIRQQLLLAGREEEDHLAWTAERLRELGSRPSLLNPLWYAGAFALGTVAATLGDARSLGFVVETERQVEAHLNQHLSSLPPQDAKSLAIVKQMSTDEAEHGAAAHALGAQTVPPLAQMGMQAMAKVMTSTAYYL</sequence>
<accession>A6SUN5</accession>